<proteinExistence type="inferred from homology"/>
<organism>
    <name type="scientific">Debaryomyces hansenii (strain ATCC 36239 / CBS 767 / BCRC 21394 / JCM 1990 / NBRC 0083 / IGC 2968)</name>
    <name type="common">Yeast</name>
    <name type="synonym">Torulaspora hansenii</name>
    <dbReference type="NCBI Taxonomy" id="284592"/>
    <lineage>
        <taxon>Eukaryota</taxon>
        <taxon>Fungi</taxon>
        <taxon>Dikarya</taxon>
        <taxon>Ascomycota</taxon>
        <taxon>Saccharomycotina</taxon>
        <taxon>Pichiomycetes</taxon>
        <taxon>Debaryomycetaceae</taxon>
        <taxon>Debaryomyces</taxon>
    </lineage>
</organism>
<name>PFA4_DEBHA</name>
<evidence type="ECO:0000255" key="1">
    <source>
        <dbReference type="HAMAP-Rule" id="MF_03199"/>
    </source>
</evidence>
<evidence type="ECO:0000255" key="2">
    <source>
        <dbReference type="PROSITE-ProRule" id="PRU00067"/>
    </source>
</evidence>
<evidence type="ECO:0000305" key="3"/>
<protein>
    <recommendedName>
        <fullName evidence="1">Palmitoyltransferase PFA4</fullName>
        <ecNumber evidence="1">2.3.1.225</ecNumber>
    </recommendedName>
    <alternativeName>
        <fullName evidence="1">Protein S-acyltransferase</fullName>
        <shortName evidence="1">PAT</shortName>
    </alternativeName>
    <alternativeName>
        <fullName evidence="1">Protein fatty acyltransferase 4</fullName>
    </alternativeName>
</protein>
<reference key="1">
    <citation type="journal article" date="2004" name="Nature">
        <title>Genome evolution in yeasts.</title>
        <authorList>
            <person name="Dujon B."/>
            <person name="Sherman D."/>
            <person name="Fischer G."/>
            <person name="Durrens P."/>
            <person name="Casaregola S."/>
            <person name="Lafontaine I."/>
            <person name="de Montigny J."/>
            <person name="Marck C."/>
            <person name="Neuveglise C."/>
            <person name="Talla E."/>
            <person name="Goffard N."/>
            <person name="Frangeul L."/>
            <person name="Aigle M."/>
            <person name="Anthouard V."/>
            <person name="Babour A."/>
            <person name="Barbe V."/>
            <person name="Barnay S."/>
            <person name="Blanchin S."/>
            <person name="Beckerich J.-M."/>
            <person name="Beyne E."/>
            <person name="Bleykasten C."/>
            <person name="Boisrame A."/>
            <person name="Boyer J."/>
            <person name="Cattolico L."/>
            <person name="Confanioleri F."/>
            <person name="de Daruvar A."/>
            <person name="Despons L."/>
            <person name="Fabre E."/>
            <person name="Fairhead C."/>
            <person name="Ferry-Dumazet H."/>
            <person name="Groppi A."/>
            <person name="Hantraye F."/>
            <person name="Hennequin C."/>
            <person name="Jauniaux N."/>
            <person name="Joyet P."/>
            <person name="Kachouri R."/>
            <person name="Kerrest A."/>
            <person name="Koszul R."/>
            <person name="Lemaire M."/>
            <person name="Lesur I."/>
            <person name="Ma L."/>
            <person name="Muller H."/>
            <person name="Nicaud J.-M."/>
            <person name="Nikolski M."/>
            <person name="Oztas S."/>
            <person name="Ozier-Kalogeropoulos O."/>
            <person name="Pellenz S."/>
            <person name="Potier S."/>
            <person name="Richard G.-F."/>
            <person name="Straub M.-L."/>
            <person name="Suleau A."/>
            <person name="Swennen D."/>
            <person name="Tekaia F."/>
            <person name="Wesolowski-Louvel M."/>
            <person name="Westhof E."/>
            <person name="Wirth B."/>
            <person name="Zeniou-Meyer M."/>
            <person name="Zivanovic Y."/>
            <person name="Bolotin-Fukuhara M."/>
            <person name="Thierry A."/>
            <person name="Bouchier C."/>
            <person name="Caudron B."/>
            <person name="Scarpelli C."/>
            <person name="Gaillardin C."/>
            <person name="Weissenbach J."/>
            <person name="Wincker P."/>
            <person name="Souciet J.-L."/>
        </authorList>
    </citation>
    <scope>NUCLEOTIDE SEQUENCE [LARGE SCALE GENOMIC DNA]</scope>
    <source>
        <strain>ATCC 36239 / CBS 767 / BCRC 21394 / JCM 1990 / NBRC 0083 / IGC 2968</strain>
    </source>
</reference>
<gene>
    <name evidence="1" type="primary">PFA4</name>
    <name type="ordered locus">DEHA2F09702g</name>
</gene>
<comment type="function">
    <text evidence="1">Mediates the reversible addition of palmitate to target proteins, thereby regulating their membrane association and biological function.</text>
</comment>
<comment type="catalytic activity">
    <reaction evidence="1">
        <text>L-cysteinyl-[protein] + hexadecanoyl-CoA = S-hexadecanoyl-L-cysteinyl-[protein] + CoA</text>
        <dbReference type="Rhea" id="RHEA:36683"/>
        <dbReference type="Rhea" id="RHEA-COMP:10131"/>
        <dbReference type="Rhea" id="RHEA-COMP:11032"/>
        <dbReference type="ChEBI" id="CHEBI:29950"/>
        <dbReference type="ChEBI" id="CHEBI:57287"/>
        <dbReference type="ChEBI" id="CHEBI:57379"/>
        <dbReference type="ChEBI" id="CHEBI:74151"/>
        <dbReference type="EC" id="2.3.1.225"/>
    </reaction>
</comment>
<comment type="subcellular location">
    <subcellularLocation>
        <location evidence="1">Endoplasmic reticulum membrane</location>
        <topology evidence="1">Multi-pass membrane protein</topology>
    </subcellularLocation>
</comment>
<comment type="domain">
    <text evidence="1">The DHHC domain is required for palmitoyltransferase activity.</text>
</comment>
<comment type="similarity">
    <text evidence="1">Belongs to the DHHC palmitoyltransferase family. PFA4 subfamily.</text>
</comment>
<comment type="sequence caution" evidence="3">
    <conflict type="erroneous gene model prediction">
        <sequence resource="EMBL-CDS" id="CAR66308"/>
    </conflict>
</comment>
<accession>Q6BLY8</accession>
<accession>B5RUD0</accession>
<dbReference type="EC" id="2.3.1.225" evidence="1"/>
<dbReference type="EMBL" id="CR382138">
    <property type="protein sequence ID" value="CAR66308.1"/>
    <property type="status" value="ALT_SEQ"/>
    <property type="molecule type" value="Genomic_DNA"/>
</dbReference>
<dbReference type="RefSeq" id="XP_002770783.1">
    <property type="nucleotide sequence ID" value="XM_002770737.1"/>
</dbReference>
<dbReference type="SMR" id="Q6BLY8"/>
<dbReference type="FunCoup" id="Q6BLY8">
    <property type="interactions" value="32"/>
</dbReference>
<dbReference type="STRING" id="284592.Q6BLY8"/>
<dbReference type="GeneID" id="8998928"/>
<dbReference type="KEGG" id="dha:DEHA2F09702g"/>
<dbReference type="eggNOG" id="KOG1314">
    <property type="taxonomic scope" value="Eukaryota"/>
</dbReference>
<dbReference type="HOGENOM" id="CLU_027721_8_0_1"/>
<dbReference type="InParanoid" id="Q6BLY8"/>
<dbReference type="OrthoDB" id="331948at2759"/>
<dbReference type="Proteomes" id="UP000000599">
    <property type="component" value="Chromosome F"/>
</dbReference>
<dbReference type="GO" id="GO:0005789">
    <property type="term" value="C:endoplasmic reticulum membrane"/>
    <property type="evidence" value="ECO:0007669"/>
    <property type="project" value="UniProtKB-SubCell"/>
</dbReference>
<dbReference type="GO" id="GO:0019706">
    <property type="term" value="F:protein-cysteine S-palmitoyltransferase activity"/>
    <property type="evidence" value="ECO:0007669"/>
    <property type="project" value="UniProtKB-UniRule"/>
</dbReference>
<dbReference type="HAMAP" id="MF_03199">
    <property type="entry name" value="DHHC_PAT_PFA4"/>
    <property type="match status" value="1"/>
</dbReference>
<dbReference type="InterPro" id="IPR001594">
    <property type="entry name" value="Palmitoyltrfase_DHHC"/>
</dbReference>
<dbReference type="InterPro" id="IPR033682">
    <property type="entry name" value="PFA4"/>
</dbReference>
<dbReference type="InterPro" id="IPR039859">
    <property type="entry name" value="PFA4/ZDH16/20/ERF2-like"/>
</dbReference>
<dbReference type="PANTHER" id="PTHR12246">
    <property type="entry name" value="PALMITOYLTRANSFERASE ZDHHC16"/>
    <property type="match status" value="1"/>
</dbReference>
<dbReference type="Pfam" id="PF01529">
    <property type="entry name" value="DHHC"/>
    <property type="match status" value="1"/>
</dbReference>
<dbReference type="PROSITE" id="PS50216">
    <property type="entry name" value="DHHC"/>
    <property type="match status" value="1"/>
</dbReference>
<sequence length="402" mass="47335">MAVQLKWPIIGVVIPCVLIAMVAYGSHYFVFRTNLSRTEQILYEVYVCIVWLSYYLAIVVDPGSPPKNFTPKAGEWRRWCKKCQNYKPERSHHCKTCNKCVLKMDHHCPWTYNCVGHNNLPHFLRFVFFLIVGMTYVLFQLGKQVLHYYDSSKLPSYLIDKKEMCAVIFLLPVTFFVFVSIIILFVRCMINLLFRGMTQIEVWEMERIGSQFHTERLWLQIRKNYFKLHGKEMPHLVSWNRTTRYYEVDENSNNDNSNENNIVPKDFTSDDIVFPYDLGVSSNMINACDYPWMWLLPWGGPRENGYHFQKNEFMEDDQLGLPWPPDGGHQEPMAPVDDDFDISDSELQDMPSLRRRLDPRNNMTRSEWMNDLGETLDDFGVDLDAEDIEHDDLVSKDEISNN</sequence>
<keyword id="KW-0012">Acyltransferase</keyword>
<keyword id="KW-0256">Endoplasmic reticulum</keyword>
<keyword id="KW-0449">Lipoprotein</keyword>
<keyword id="KW-0472">Membrane</keyword>
<keyword id="KW-0564">Palmitate</keyword>
<keyword id="KW-1185">Reference proteome</keyword>
<keyword id="KW-0808">Transferase</keyword>
<keyword id="KW-0812">Transmembrane</keyword>
<keyword id="KW-1133">Transmembrane helix</keyword>
<feature type="chain" id="PRO_0000212965" description="Palmitoyltransferase PFA4">
    <location>
        <begin position="1"/>
        <end position="402"/>
    </location>
</feature>
<feature type="topological domain" description="Cytoplasmic" evidence="1">
    <location>
        <begin position="1"/>
        <end position="8"/>
    </location>
</feature>
<feature type="transmembrane region" description="Helical" evidence="1">
    <location>
        <begin position="9"/>
        <end position="29"/>
    </location>
</feature>
<feature type="topological domain" description="Lumenal" evidence="1">
    <location>
        <begin position="30"/>
        <end position="39"/>
    </location>
</feature>
<feature type="transmembrane region" description="Helical" evidence="1">
    <location>
        <begin position="40"/>
        <end position="60"/>
    </location>
</feature>
<feature type="topological domain" description="Cytoplasmic" evidence="1">
    <location>
        <begin position="61"/>
        <end position="125"/>
    </location>
</feature>
<feature type="transmembrane region" description="Helical" evidence="1">
    <location>
        <begin position="126"/>
        <end position="146"/>
    </location>
</feature>
<feature type="topological domain" description="Lumenal" evidence="1">
    <location>
        <begin position="147"/>
        <end position="165"/>
    </location>
</feature>
<feature type="transmembrane region" description="Helical" evidence="1">
    <location>
        <begin position="166"/>
        <end position="186"/>
    </location>
</feature>
<feature type="topological domain" description="Cytoplasmic" evidence="1">
    <location>
        <begin position="187"/>
        <end position="402"/>
    </location>
</feature>
<feature type="domain" description="DHHC" evidence="2">
    <location>
        <begin position="78"/>
        <end position="128"/>
    </location>
</feature>
<feature type="active site" description="S-palmitoyl cysteine intermediate" evidence="1">
    <location>
        <position position="108"/>
    </location>
</feature>